<dbReference type="EC" id="2.8.1.13" evidence="1"/>
<dbReference type="EMBL" id="CP000910">
    <property type="protein sequence ID" value="ABY23409.1"/>
    <property type="molecule type" value="Genomic_DNA"/>
</dbReference>
<dbReference type="RefSeq" id="WP_012245082.1">
    <property type="nucleotide sequence ID" value="NC_010168.1"/>
</dbReference>
<dbReference type="SMR" id="A9WMS3"/>
<dbReference type="STRING" id="288705.RSal33209_1673"/>
<dbReference type="KEGG" id="rsa:RSal33209_1673"/>
<dbReference type="eggNOG" id="COG0482">
    <property type="taxonomic scope" value="Bacteria"/>
</dbReference>
<dbReference type="HOGENOM" id="CLU_035188_0_2_11"/>
<dbReference type="Proteomes" id="UP000002007">
    <property type="component" value="Chromosome"/>
</dbReference>
<dbReference type="GO" id="GO:0005737">
    <property type="term" value="C:cytoplasm"/>
    <property type="evidence" value="ECO:0007669"/>
    <property type="project" value="UniProtKB-SubCell"/>
</dbReference>
<dbReference type="GO" id="GO:0005524">
    <property type="term" value="F:ATP binding"/>
    <property type="evidence" value="ECO:0007669"/>
    <property type="project" value="UniProtKB-KW"/>
</dbReference>
<dbReference type="GO" id="GO:0000049">
    <property type="term" value="F:tRNA binding"/>
    <property type="evidence" value="ECO:0007669"/>
    <property type="project" value="UniProtKB-KW"/>
</dbReference>
<dbReference type="GO" id="GO:0103016">
    <property type="term" value="F:tRNA-uridine 2-sulfurtransferase activity"/>
    <property type="evidence" value="ECO:0007669"/>
    <property type="project" value="UniProtKB-EC"/>
</dbReference>
<dbReference type="GO" id="GO:0002143">
    <property type="term" value="P:tRNA wobble position uridine thiolation"/>
    <property type="evidence" value="ECO:0007669"/>
    <property type="project" value="TreeGrafter"/>
</dbReference>
<dbReference type="CDD" id="cd01998">
    <property type="entry name" value="MnmA_TRMU-like"/>
    <property type="match status" value="1"/>
</dbReference>
<dbReference type="FunFam" id="3.40.50.620:FF:000057">
    <property type="entry name" value="tRNA-specific 2-thiouridylase MnmA"/>
    <property type="match status" value="1"/>
</dbReference>
<dbReference type="Gene3D" id="2.30.30.280">
    <property type="entry name" value="Adenine nucleotide alpha hydrolases-like domains"/>
    <property type="match status" value="1"/>
</dbReference>
<dbReference type="Gene3D" id="3.40.50.620">
    <property type="entry name" value="HUPs"/>
    <property type="match status" value="1"/>
</dbReference>
<dbReference type="Gene3D" id="2.40.30.10">
    <property type="entry name" value="Translation factors"/>
    <property type="match status" value="1"/>
</dbReference>
<dbReference type="HAMAP" id="MF_00144">
    <property type="entry name" value="tRNA_thiouridyl_MnmA"/>
    <property type="match status" value="1"/>
</dbReference>
<dbReference type="InterPro" id="IPR004506">
    <property type="entry name" value="MnmA-like"/>
</dbReference>
<dbReference type="InterPro" id="IPR046885">
    <property type="entry name" value="MnmA-like_C"/>
</dbReference>
<dbReference type="InterPro" id="IPR046884">
    <property type="entry name" value="MnmA-like_central"/>
</dbReference>
<dbReference type="InterPro" id="IPR023382">
    <property type="entry name" value="MnmA-like_central_sf"/>
</dbReference>
<dbReference type="InterPro" id="IPR014729">
    <property type="entry name" value="Rossmann-like_a/b/a_fold"/>
</dbReference>
<dbReference type="NCBIfam" id="NF001138">
    <property type="entry name" value="PRK00143.1"/>
    <property type="match status" value="1"/>
</dbReference>
<dbReference type="NCBIfam" id="TIGR00420">
    <property type="entry name" value="trmU"/>
    <property type="match status" value="1"/>
</dbReference>
<dbReference type="PANTHER" id="PTHR11933:SF5">
    <property type="entry name" value="MITOCHONDRIAL TRNA-SPECIFIC 2-THIOURIDYLASE 1"/>
    <property type="match status" value="1"/>
</dbReference>
<dbReference type="PANTHER" id="PTHR11933">
    <property type="entry name" value="TRNA 5-METHYLAMINOMETHYL-2-THIOURIDYLATE -METHYLTRANSFERASE"/>
    <property type="match status" value="1"/>
</dbReference>
<dbReference type="Pfam" id="PF03054">
    <property type="entry name" value="tRNA_Me_trans"/>
    <property type="match status" value="1"/>
</dbReference>
<dbReference type="Pfam" id="PF20258">
    <property type="entry name" value="tRNA_Me_trans_C"/>
    <property type="match status" value="1"/>
</dbReference>
<dbReference type="Pfam" id="PF20259">
    <property type="entry name" value="tRNA_Me_trans_M"/>
    <property type="match status" value="1"/>
</dbReference>
<dbReference type="SUPFAM" id="SSF52402">
    <property type="entry name" value="Adenine nucleotide alpha hydrolases-like"/>
    <property type="match status" value="1"/>
</dbReference>
<gene>
    <name evidence="1" type="primary">mnmA</name>
    <name type="synonym">trmU</name>
    <name type="ordered locus">RSal33209_1673</name>
</gene>
<organism>
    <name type="scientific">Renibacterium salmoninarum (strain ATCC 33209 / DSM 20767 / JCM 11484 / NBRC 15589 / NCIMB 2235)</name>
    <dbReference type="NCBI Taxonomy" id="288705"/>
    <lineage>
        <taxon>Bacteria</taxon>
        <taxon>Bacillati</taxon>
        <taxon>Actinomycetota</taxon>
        <taxon>Actinomycetes</taxon>
        <taxon>Micrococcales</taxon>
        <taxon>Micrococcaceae</taxon>
        <taxon>Renibacterium</taxon>
    </lineage>
</organism>
<name>MNMA_RENSM</name>
<accession>A9WMS3</accession>
<evidence type="ECO:0000255" key="1">
    <source>
        <dbReference type="HAMAP-Rule" id="MF_00144"/>
    </source>
</evidence>
<reference key="1">
    <citation type="journal article" date="2008" name="J. Bacteriol.">
        <title>Genome sequence of the fish pathogen Renibacterium salmoninarum suggests reductive evolution away from an environmental Arthrobacter ancestor.</title>
        <authorList>
            <person name="Wiens G.D."/>
            <person name="Rockey D.D."/>
            <person name="Wu Z."/>
            <person name="Chang J."/>
            <person name="Levy R."/>
            <person name="Crane S."/>
            <person name="Chen D.S."/>
            <person name="Capri G.R."/>
            <person name="Burnett J.R."/>
            <person name="Sudheesh P.S."/>
            <person name="Schipma M.J."/>
            <person name="Burd H."/>
            <person name="Bhattacharyya A."/>
            <person name="Rhodes L.D."/>
            <person name="Kaul R."/>
            <person name="Strom M.S."/>
        </authorList>
    </citation>
    <scope>NUCLEOTIDE SEQUENCE [LARGE SCALE GENOMIC DNA]</scope>
    <source>
        <strain>ATCC 33209 / DSM 20767 / JCM 11484 / NBRC 15589 / NCIMB 2235</strain>
    </source>
</reference>
<comment type="function">
    <text evidence="1">Catalyzes the 2-thiolation of uridine at the wobble position (U34) of tRNA, leading to the formation of s(2)U34.</text>
</comment>
<comment type="catalytic activity">
    <reaction evidence="1">
        <text>S-sulfanyl-L-cysteinyl-[protein] + uridine(34) in tRNA + AH2 + ATP = 2-thiouridine(34) in tRNA + L-cysteinyl-[protein] + A + AMP + diphosphate + H(+)</text>
        <dbReference type="Rhea" id="RHEA:47032"/>
        <dbReference type="Rhea" id="RHEA-COMP:10131"/>
        <dbReference type="Rhea" id="RHEA-COMP:11726"/>
        <dbReference type="Rhea" id="RHEA-COMP:11727"/>
        <dbReference type="Rhea" id="RHEA-COMP:11728"/>
        <dbReference type="ChEBI" id="CHEBI:13193"/>
        <dbReference type="ChEBI" id="CHEBI:15378"/>
        <dbReference type="ChEBI" id="CHEBI:17499"/>
        <dbReference type="ChEBI" id="CHEBI:29950"/>
        <dbReference type="ChEBI" id="CHEBI:30616"/>
        <dbReference type="ChEBI" id="CHEBI:33019"/>
        <dbReference type="ChEBI" id="CHEBI:61963"/>
        <dbReference type="ChEBI" id="CHEBI:65315"/>
        <dbReference type="ChEBI" id="CHEBI:87170"/>
        <dbReference type="ChEBI" id="CHEBI:456215"/>
        <dbReference type="EC" id="2.8.1.13"/>
    </reaction>
</comment>
<comment type="subcellular location">
    <subcellularLocation>
        <location evidence="1">Cytoplasm</location>
    </subcellularLocation>
</comment>
<comment type="similarity">
    <text evidence="1">Belongs to the MnmA/TRMU family.</text>
</comment>
<sequence length="378" mass="40713">MKVLAAMSGGVDSAVAAARTVEAGHEVVGVHLALSRMPGTLRTGSRGCCTIEDSTDAWKACEKLGIPYYVWDFSERFKEDVVDDFIAEYAAGRTPNPCMRCNERIKFAALLEKAIALGFDAVCTGHYARVAQDEDGNYELHRASDWAKDQSYVLGVLTHEQLKHSMFPLSDAQTKAEVRAEADRRGLSVAKKPDSHDICFISDGDTRGWLAEKIDMTPGEILDQSGAKVGTHEGANAFTVGQRRGLKLGTPAADGKPRFVLEIRPKENTVVVGPEQMLAMNEIRGIKISWAGEPIAEVGAGTEFDCMAQVRAHGDPVPARAFVTTDDDGAPLLVVNLIDPLRGVAPGQTVVLYQGTRVLGQATIDTARSLVSSSTKVD</sequence>
<proteinExistence type="inferred from homology"/>
<protein>
    <recommendedName>
        <fullName evidence="1">tRNA-specific 2-thiouridylase MnmA</fullName>
        <ecNumber evidence="1">2.8.1.13</ecNumber>
    </recommendedName>
</protein>
<feature type="chain" id="PRO_1000076569" description="tRNA-specific 2-thiouridylase MnmA">
    <location>
        <begin position="1"/>
        <end position="378"/>
    </location>
</feature>
<feature type="region of interest" description="Interaction with tRNA" evidence="1">
    <location>
        <begin position="148"/>
        <end position="150"/>
    </location>
</feature>
<feature type="active site" description="Nucleophile" evidence="1">
    <location>
        <position position="101"/>
    </location>
</feature>
<feature type="active site" description="Cysteine persulfide intermediate" evidence="1">
    <location>
        <position position="199"/>
    </location>
</feature>
<feature type="binding site" evidence="1">
    <location>
        <begin position="6"/>
        <end position="13"/>
    </location>
    <ligand>
        <name>ATP</name>
        <dbReference type="ChEBI" id="CHEBI:30616"/>
    </ligand>
</feature>
<feature type="binding site" evidence="1">
    <location>
        <position position="32"/>
    </location>
    <ligand>
        <name>ATP</name>
        <dbReference type="ChEBI" id="CHEBI:30616"/>
    </ligand>
</feature>
<feature type="binding site" evidence="1">
    <location>
        <position position="125"/>
    </location>
    <ligand>
        <name>ATP</name>
        <dbReference type="ChEBI" id="CHEBI:30616"/>
    </ligand>
</feature>
<feature type="site" description="Interaction with tRNA" evidence="1">
    <location>
        <position position="126"/>
    </location>
</feature>
<feature type="site" description="Interaction with tRNA" evidence="1">
    <location>
        <position position="348"/>
    </location>
</feature>
<feature type="disulfide bond" description="Alternate" evidence="1">
    <location>
        <begin position="101"/>
        <end position="199"/>
    </location>
</feature>
<keyword id="KW-0067">ATP-binding</keyword>
<keyword id="KW-0963">Cytoplasm</keyword>
<keyword id="KW-1015">Disulfide bond</keyword>
<keyword id="KW-0547">Nucleotide-binding</keyword>
<keyword id="KW-1185">Reference proteome</keyword>
<keyword id="KW-0694">RNA-binding</keyword>
<keyword id="KW-0808">Transferase</keyword>
<keyword id="KW-0819">tRNA processing</keyword>
<keyword id="KW-0820">tRNA-binding</keyword>